<keyword id="KW-0007">Acetylation</keyword>
<keyword id="KW-0009">Actin-binding</keyword>
<keyword id="KW-0963">Cytoplasm</keyword>
<keyword id="KW-0206">Cytoskeleton</keyword>
<keyword id="KW-0539">Nucleus</keyword>
<keyword id="KW-0597">Phosphoprotein</keyword>
<keyword id="KW-1185">Reference proteome</keyword>
<comment type="function">
    <text evidence="3">Controls reversibly actin polymerization and depolymerization in a pH-sensitive manner. It has the ability to bind G- and F-actin in a 1:1 ratio of cofilin to actin. It is the major component of intranuclear and cytoplasmic actin rods. Required for muscle maintenance. May play a role during the exchange of alpha-actin forms during the early postnatal remodeling of the sarcomere (By similarity).</text>
</comment>
<comment type="subcellular location">
    <subcellularLocation>
        <location evidence="1">Nucleus matrix</location>
    </subcellularLocation>
    <subcellularLocation>
        <location evidence="1">Cytoplasm</location>
        <location evidence="1">Cytoskeleton</location>
    </subcellularLocation>
    <text evidence="3">Colocalizes with CSPR3 in the Z line of sarcomeres.</text>
</comment>
<comment type="PTM">
    <text evidence="1">The phosphorylation of Ser-24 may prevent recognition of the nuclear localization signal.</text>
</comment>
<comment type="similarity">
    <text evidence="6">Belongs to the actin-binding proteins ADF family.</text>
</comment>
<accession>Q5G6V9</accession>
<reference key="1">
    <citation type="submission" date="2005-05" db="EMBL/GenBank/DDBJ databases">
        <title>Characterization of cofilin 2 (CFL2) in pig skeletal muscle.</title>
        <authorList>
            <person name="Su Y."/>
            <person name="Song H."/>
            <person name="Zeng R."/>
            <person name="Liu D."/>
            <person name="Zhu B."/>
            <person name="Ba C."/>
        </authorList>
    </citation>
    <scope>NUCLEOTIDE SEQUENCE [MRNA]</scope>
    <source>
        <tissue>Skeletal muscle</tissue>
    </source>
</reference>
<reference key="2">
    <citation type="submission" date="2005-06" db="EMBL/GenBank/DDBJ databases">
        <title>Cloning and sequencing of gene cofilin 2 in pig.</title>
        <authorList>
            <person name="Su Y."/>
            <person name="Zeng R."/>
            <person name="Liu D."/>
            <person name="Song H."/>
            <person name="Zhu B."/>
            <person name="Ba C."/>
        </authorList>
    </citation>
    <scope>NUCLEOTIDE SEQUENCE [GENOMIC DNA]</scope>
</reference>
<gene>
    <name type="primary">CFL2</name>
</gene>
<organism>
    <name type="scientific">Sus scrofa</name>
    <name type="common">Pig</name>
    <dbReference type="NCBI Taxonomy" id="9823"/>
    <lineage>
        <taxon>Eukaryota</taxon>
        <taxon>Metazoa</taxon>
        <taxon>Chordata</taxon>
        <taxon>Craniata</taxon>
        <taxon>Vertebrata</taxon>
        <taxon>Euteleostomi</taxon>
        <taxon>Mammalia</taxon>
        <taxon>Eutheria</taxon>
        <taxon>Laurasiatheria</taxon>
        <taxon>Artiodactyla</taxon>
        <taxon>Suina</taxon>
        <taxon>Suidae</taxon>
        <taxon>Sus</taxon>
    </lineage>
</organism>
<protein>
    <recommendedName>
        <fullName>Cofilin-2</fullName>
    </recommendedName>
    <alternativeName>
        <fullName>Cofilin, muscle isoform</fullName>
    </alternativeName>
</protein>
<proteinExistence type="evidence at transcript level"/>
<name>COF2_PIG</name>
<sequence length="166" mass="18737">MASGVTVNDEVIKVFNDMKVRKSSTQEEIKKRKKAVLFCLSDDKRQIIVEEAKQILVGDIGDTVEDPYTSFVKLLPLNDCRYALYDATYETKESKKEDLVFIFWAPESAPLKSKMIYASSKDAIKKKFTGIKHEWQVNGLDDIKDRSTLGEKLGGNVVVSLEGKPL</sequence>
<evidence type="ECO:0000250" key="1"/>
<evidence type="ECO:0000250" key="2">
    <source>
        <dbReference type="UniProtKB" id="P45591"/>
    </source>
</evidence>
<evidence type="ECO:0000250" key="3">
    <source>
        <dbReference type="UniProtKB" id="Q9Y281"/>
    </source>
</evidence>
<evidence type="ECO:0000255" key="4"/>
<evidence type="ECO:0000255" key="5">
    <source>
        <dbReference type="PROSITE-ProRule" id="PRU00599"/>
    </source>
</evidence>
<evidence type="ECO:0000305" key="6"/>
<dbReference type="EMBL" id="DQ058293">
    <property type="protein sequence ID" value="AAY78932.1"/>
    <property type="molecule type" value="mRNA"/>
</dbReference>
<dbReference type="EMBL" id="AY830126">
    <property type="protein sequence ID" value="AAW66489.4"/>
    <property type="molecule type" value="Genomic_DNA"/>
</dbReference>
<dbReference type="RefSeq" id="NP_001020386.1">
    <property type="nucleotide sequence ID" value="NM_001025215.1"/>
</dbReference>
<dbReference type="RefSeq" id="XP_005656356.1">
    <property type="nucleotide sequence ID" value="XM_005656299.3"/>
</dbReference>
<dbReference type="BMRB" id="Q5G6V9"/>
<dbReference type="SMR" id="Q5G6V9"/>
<dbReference type="FunCoup" id="Q5G6V9">
    <property type="interactions" value="820"/>
</dbReference>
<dbReference type="STRING" id="9823.ENSSSCP00000002141"/>
<dbReference type="PaxDb" id="9823-ENSSSCP00000002141"/>
<dbReference type="PeptideAtlas" id="Q5G6V9"/>
<dbReference type="Ensembl" id="ENSSSCT00000002192.5">
    <property type="protein sequence ID" value="ENSSSCP00000002141.2"/>
    <property type="gene ID" value="ENSSSCG00000001959.5"/>
</dbReference>
<dbReference type="Ensembl" id="ENSSSCT00000064495.3">
    <property type="protein sequence ID" value="ENSSSCP00000045533.1"/>
    <property type="gene ID" value="ENSSSCG00000001959.5"/>
</dbReference>
<dbReference type="Ensembl" id="ENSSSCT00015081329.1">
    <property type="protein sequence ID" value="ENSSSCP00015032906.1"/>
    <property type="gene ID" value="ENSSSCG00015060726.1"/>
</dbReference>
<dbReference type="Ensembl" id="ENSSSCT00025097662.1">
    <property type="protein sequence ID" value="ENSSSCP00025042895.1"/>
    <property type="gene ID" value="ENSSSCG00025071059.1"/>
</dbReference>
<dbReference type="Ensembl" id="ENSSSCT00025097775.1">
    <property type="protein sequence ID" value="ENSSSCP00025042960.1"/>
    <property type="gene ID" value="ENSSSCG00025071059.1"/>
</dbReference>
<dbReference type="Ensembl" id="ENSSSCT00030084024.1">
    <property type="protein sequence ID" value="ENSSSCP00030038627.1"/>
    <property type="gene ID" value="ENSSSCG00030060165.1"/>
</dbReference>
<dbReference type="Ensembl" id="ENSSSCT00030084061.1">
    <property type="protein sequence ID" value="ENSSSCP00030038644.1"/>
    <property type="gene ID" value="ENSSSCG00030060165.1"/>
</dbReference>
<dbReference type="Ensembl" id="ENSSSCT00035058921.1">
    <property type="protein sequence ID" value="ENSSSCP00035023692.1"/>
    <property type="gene ID" value="ENSSSCG00035044355.1"/>
</dbReference>
<dbReference type="Ensembl" id="ENSSSCT00035058928.1">
    <property type="protein sequence ID" value="ENSSSCP00035023697.1"/>
    <property type="gene ID" value="ENSSSCG00035044355.1"/>
</dbReference>
<dbReference type="Ensembl" id="ENSSSCT00040014372.1">
    <property type="protein sequence ID" value="ENSSSCP00040005591.1"/>
    <property type="gene ID" value="ENSSSCG00040010975.1"/>
</dbReference>
<dbReference type="Ensembl" id="ENSSSCT00040014403.1">
    <property type="protein sequence ID" value="ENSSSCP00040005610.1"/>
    <property type="gene ID" value="ENSSSCG00040010975.1"/>
</dbReference>
<dbReference type="Ensembl" id="ENSSSCT00045015210.1">
    <property type="protein sequence ID" value="ENSSSCP00045010566.1"/>
    <property type="gene ID" value="ENSSSCG00045008975.1"/>
</dbReference>
<dbReference type="Ensembl" id="ENSSSCT00045015248.1">
    <property type="protein sequence ID" value="ENSSSCP00045010588.1"/>
    <property type="gene ID" value="ENSSSCG00045008975.1"/>
</dbReference>
<dbReference type="Ensembl" id="ENSSSCT00050007891.1">
    <property type="protein sequence ID" value="ENSSSCP00050003343.1"/>
    <property type="gene ID" value="ENSSSCG00050005802.1"/>
</dbReference>
<dbReference type="Ensembl" id="ENSSSCT00050007910.1">
    <property type="protein sequence ID" value="ENSSSCP00050003354.1"/>
    <property type="gene ID" value="ENSSSCG00050005802.1"/>
</dbReference>
<dbReference type="Ensembl" id="ENSSSCT00055035195.1">
    <property type="protein sequence ID" value="ENSSSCP00055027950.1"/>
    <property type="gene ID" value="ENSSSCG00055017925.1"/>
</dbReference>
<dbReference type="Ensembl" id="ENSSSCT00055035425.1">
    <property type="protein sequence ID" value="ENSSSCP00055028135.1"/>
    <property type="gene ID" value="ENSSSCG00055017925.1"/>
</dbReference>
<dbReference type="Ensembl" id="ENSSSCT00060103565.1">
    <property type="protein sequence ID" value="ENSSSCP00060045254.1"/>
    <property type="gene ID" value="ENSSSCG00060075576.1"/>
</dbReference>
<dbReference type="Ensembl" id="ENSSSCT00060103642.1">
    <property type="protein sequence ID" value="ENSSSCP00060045316.1"/>
    <property type="gene ID" value="ENSSSCG00060075576.1"/>
</dbReference>
<dbReference type="Ensembl" id="ENSSSCT00065087321.1">
    <property type="protein sequence ID" value="ENSSSCP00065038177.1"/>
    <property type="gene ID" value="ENSSSCG00065063654.1"/>
</dbReference>
<dbReference type="Ensembl" id="ENSSSCT00065087327.1">
    <property type="protein sequence ID" value="ENSSSCP00065038179.1"/>
    <property type="gene ID" value="ENSSSCG00065063654.1"/>
</dbReference>
<dbReference type="Ensembl" id="ENSSSCT00070013566.1">
    <property type="protein sequence ID" value="ENSSSCP00070011187.1"/>
    <property type="gene ID" value="ENSSSCG00070007061.1"/>
</dbReference>
<dbReference type="Ensembl" id="ENSSSCT00070013575.1">
    <property type="protein sequence ID" value="ENSSSCP00070011194.1"/>
    <property type="gene ID" value="ENSSSCG00070007061.1"/>
</dbReference>
<dbReference type="Ensembl" id="ENSSSCT00085003647">
    <property type="protein sequence ID" value="ENSSSCP00085002702"/>
    <property type="gene ID" value="ENSSSCG00085002151"/>
</dbReference>
<dbReference type="Ensembl" id="ENSSSCT00085003656">
    <property type="protein sequence ID" value="ENSSSCP00085002711"/>
    <property type="gene ID" value="ENSSSCG00085002151"/>
</dbReference>
<dbReference type="Ensembl" id="ENSSSCT00090037705">
    <property type="protein sequence ID" value="ENSSSCP00090023513"/>
    <property type="gene ID" value="ENSSSCG00090021260"/>
</dbReference>
<dbReference type="Ensembl" id="ENSSSCT00090037712">
    <property type="protein sequence ID" value="ENSSSCP00090023518"/>
    <property type="gene ID" value="ENSSSCG00090021260"/>
</dbReference>
<dbReference type="Ensembl" id="ENSSSCT00105002971">
    <property type="protein sequence ID" value="ENSSSCP00105002223"/>
    <property type="gene ID" value="ENSSSCG00105001530"/>
</dbReference>
<dbReference type="Ensembl" id="ENSSSCT00105003001">
    <property type="protein sequence ID" value="ENSSSCP00105002249"/>
    <property type="gene ID" value="ENSSSCG00105001530"/>
</dbReference>
<dbReference type="Ensembl" id="ENSSSCT00110034485">
    <property type="protein sequence ID" value="ENSSSCP00110023461"/>
    <property type="gene ID" value="ENSSSCG00110018047"/>
</dbReference>
<dbReference type="Ensembl" id="ENSSSCT00110034526">
    <property type="protein sequence ID" value="ENSSSCP00110023493"/>
    <property type="gene ID" value="ENSSSCG00110018047"/>
</dbReference>
<dbReference type="Ensembl" id="ENSSSCT00115012155">
    <property type="protein sequence ID" value="ENSSSCP00115011481"/>
    <property type="gene ID" value="ENSSSCG00115006976"/>
</dbReference>
<dbReference type="Ensembl" id="ENSSSCT00115012190">
    <property type="protein sequence ID" value="ENSSSCP00115011516"/>
    <property type="gene ID" value="ENSSSCG00115006976"/>
</dbReference>
<dbReference type="Ensembl" id="ENSSSCT00130051450">
    <property type="protein sequence ID" value="ENSSSCP00130036589"/>
    <property type="gene ID" value="ENSSSCG00130026452"/>
</dbReference>
<dbReference type="Ensembl" id="ENSSSCT00130051512">
    <property type="protein sequence ID" value="ENSSSCP00130036623"/>
    <property type="gene ID" value="ENSSSCG00130026452"/>
</dbReference>
<dbReference type="GeneID" id="497233"/>
<dbReference type="KEGG" id="ssc:497233"/>
<dbReference type="CTD" id="1073"/>
<dbReference type="VGNC" id="VGNC:86611">
    <property type="gene designation" value="CFL2"/>
</dbReference>
<dbReference type="eggNOG" id="KOG1735">
    <property type="taxonomic scope" value="Eukaryota"/>
</dbReference>
<dbReference type="GeneTree" id="ENSGT00950000183000"/>
<dbReference type="HOGENOM" id="CLU_094004_0_0_1"/>
<dbReference type="InParanoid" id="Q5G6V9"/>
<dbReference type="OMA" id="QCRFAVY"/>
<dbReference type="OrthoDB" id="10249245at2759"/>
<dbReference type="TreeFam" id="TF328601"/>
<dbReference type="Proteomes" id="UP000008227">
    <property type="component" value="Chromosome 7"/>
</dbReference>
<dbReference type="Proteomes" id="UP000314985">
    <property type="component" value="Chromosome 7"/>
</dbReference>
<dbReference type="Proteomes" id="UP000694570">
    <property type="component" value="Unplaced"/>
</dbReference>
<dbReference type="Proteomes" id="UP000694571">
    <property type="component" value="Unplaced"/>
</dbReference>
<dbReference type="Proteomes" id="UP000694720">
    <property type="component" value="Unplaced"/>
</dbReference>
<dbReference type="Proteomes" id="UP000694722">
    <property type="component" value="Unplaced"/>
</dbReference>
<dbReference type="Proteomes" id="UP000694723">
    <property type="component" value="Unplaced"/>
</dbReference>
<dbReference type="Proteomes" id="UP000694724">
    <property type="component" value="Unplaced"/>
</dbReference>
<dbReference type="Proteomes" id="UP000694725">
    <property type="component" value="Unplaced"/>
</dbReference>
<dbReference type="Proteomes" id="UP000694726">
    <property type="component" value="Unplaced"/>
</dbReference>
<dbReference type="Proteomes" id="UP000694727">
    <property type="component" value="Unplaced"/>
</dbReference>
<dbReference type="Proteomes" id="UP000694728">
    <property type="component" value="Unplaced"/>
</dbReference>
<dbReference type="Bgee" id="ENSSSCG00000001959">
    <property type="expression patterns" value="Expressed in muscle tissue and 44 other cell types or tissues"/>
</dbReference>
<dbReference type="ExpressionAtlas" id="Q5G6V9">
    <property type="expression patterns" value="baseline and differential"/>
</dbReference>
<dbReference type="GO" id="GO:0015629">
    <property type="term" value="C:actin cytoskeleton"/>
    <property type="evidence" value="ECO:0000318"/>
    <property type="project" value="GO_Central"/>
</dbReference>
<dbReference type="GO" id="GO:0005737">
    <property type="term" value="C:cytoplasm"/>
    <property type="evidence" value="ECO:0000318"/>
    <property type="project" value="GO_Central"/>
</dbReference>
<dbReference type="GO" id="GO:0016363">
    <property type="term" value="C:nuclear matrix"/>
    <property type="evidence" value="ECO:0007669"/>
    <property type="project" value="UniProtKB-SubCell"/>
</dbReference>
<dbReference type="GO" id="GO:0030018">
    <property type="term" value="C:Z disc"/>
    <property type="evidence" value="ECO:0007669"/>
    <property type="project" value="Ensembl"/>
</dbReference>
<dbReference type="GO" id="GO:0051015">
    <property type="term" value="F:actin filament binding"/>
    <property type="evidence" value="ECO:0000250"/>
    <property type="project" value="UniProtKB"/>
</dbReference>
<dbReference type="GO" id="GO:0030042">
    <property type="term" value="P:actin filament depolymerization"/>
    <property type="evidence" value="ECO:0000250"/>
    <property type="project" value="UniProtKB"/>
</dbReference>
<dbReference type="GO" id="GO:0030043">
    <property type="term" value="P:actin filament fragmentation"/>
    <property type="evidence" value="ECO:0000318"/>
    <property type="project" value="GO_Central"/>
</dbReference>
<dbReference type="GO" id="GO:0051014">
    <property type="term" value="P:actin filament severing"/>
    <property type="evidence" value="ECO:0000318"/>
    <property type="project" value="GO_Central"/>
</dbReference>
<dbReference type="GO" id="GO:0046716">
    <property type="term" value="P:muscle cell cellular homeostasis"/>
    <property type="evidence" value="ECO:0007669"/>
    <property type="project" value="Ensembl"/>
</dbReference>
<dbReference type="GO" id="GO:0030836">
    <property type="term" value="P:positive regulation of actin filament depolymerization"/>
    <property type="evidence" value="ECO:0007669"/>
    <property type="project" value="Ensembl"/>
</dbReference>
<dbReference type="GO" id="GO:0045214">
    <property type="term" value="P:sarcomere organization"/>
    <property type="evidence" value="ECO:0007669"/>
    <property type="project" value="Ensembl"/>
</dbReference>
<dbReference type="GO" id="GO:0007519">
    <property type="term" value="P:skeletal muscle tissue development"/>
    <property type="evidence" value="ECO:0007669"/>
    <property type="project" value="Ensembl"/>
</dbReference>
<dbReference type="CDD" id="cd11286">
    <property type="entry name" value="ADF_cofilin_like"/>
    <property type="match status" value="1"/>
</dbReference>
<dbReference type="FunFam" id="3.40.20.10:FF:000010">
    <property type="entry name" value="Putative destrin"/>
    <property type="match status" value="1"/>
</dbReference>
<dbReference type="Gene3D" id="3.40.20.10">
    <property type="entry name" value="Severin"/>
    <property type="match status" value="1"/>
</dbReference>
<dbReference type="InterPro" id="IPR002108">
    <property type="entry name" value="ADF-H"/>
</dbReference>
<dbReference type="InterPro" id="IPR029006">
    <property type="entry name" value="ADF-H/Gelsolin-like_dom_sf"/>
</dbReference>
<dbReference type="InterPro" id="IPR017904">
    <property type="entry name" value="ADF/Cofilin"/>
</dbReference>
<dbReference type="PANTHER" id="PTHR11913">
    <property type="entry name" value="COFILIN-RELATED"/>
    <property type="match status" value="1"/>
</dbReference>
<dbReference type="Pfam" id="PF00241">
    <property type="entry name" value="Cofilin_ADF"/>
    <property type="match status" value="1"/>
</dbReference>
<dbReference type="PRINTS" id="PR00006">
    <property type="entry name" value="COFILIN"/>
</dbReference>
<dbReference type="SMART" id="SM00102">
    <property type="entry name" value="ADF"/>
    <property type="match status" value="1"/>
</dbReference>
<dbReference type="SUPFAM" id="SSF55753">
    <property type="entry name" value="Actin depolymerizing proteins"/>
    <property type="match status" value="1"/>
</dbReference>
<dbReference type="PROSITE" id="PS51263">
    <property type="entry name" value="ADF_H"/>
    <property type="match status" value="1"/>
</dbReference>
<feature type="initiator methionine" description="Removed" evidence="3">
    <location>
        <position position="1"/>
    </location>
</feature>
<feature type="chain" id="PRO_0000214909" description="Cofilin-2">
    <location>
        <begin position="2"/>
        <end position="166"/>
    </location>
</feature>
<feature type="domain" description="ADF-H" evidence="5">
    <location>
        <begin position="4"/>
        <end position="153"/>
    </location>
</feature>
<feature type="short sequence motif" description="Nuclear localization signal" evidence="4">
    <location>
        <begin position="30"/>
        <end position="34"/>
    </location>
</feature>
<feature type="modified residue" description="N-acetylalanine" evidence="3">
    <location>
        <position position="2"/>
    </location>
</feature>
<feature type="modified residue" description="Phosphoserine" evidence="3">
    <location>
        <position position="3"/>
    </location>
</feature>
<feature type="modified residue" description="Phosphothreonine" evidence="2">
    <location>
        <position position="6"/>
    </location>
</feature>